<reference key="1">
    <citation type="journal article" date="1996" name="Microbiology">
        <title>The 25 degrees-36 degrees region of the Bacillus subtilis chromosome: determination of the sequence of a 146 kb segment and identification of 113 genes.</title>
        <authorList>
            <person name="Yamane K."/>
            <person name="Kumano M."/>
            <person name="Kurita K."/>
        </authorList>
    </citation>
    <scope>NUCLEOTIDE SEQUENCE [GENOMIC DNA]</scope>
    <source>
        <strain>168</strain>
    </source>
</reference>
<reference key="2">
    <citation type="journal article" date="1997" name="Nature">
        <title>The complete genome sequence of the Gram-positive bacterium Bacillus subtilis.</title>
        <authorList>
            <person name="Kunst F."/>
            <person name="Ogasawara N."/>
            <person name="Moszer I."/>
            <person name="Albertini A.M."/>
            <person name="Alloni G."/>
            <person name="Azevedo V."/>
            <person name="Bertero M.G."/>
            <person name="Bessieres P."/>
            <person name="Bolotin A."/>
            <person name="Borchert S."/>
            <person name="Borriss R."/>
            <person name="Boursier L."/>
            <person name="Brans A."/>
            <person name="Braun M."/>
            <person name="Brignell S.C."/>
            <person name="Bron S."/>
            <person name="Brouillet S."/>
            <person name="Bruschi C.V."/>
            <person name="Caldwell B."/>
            <person name="Capuano V."/>
            <person name="Carter N.M."/>
            <person name="Choi S.-K."/>
            <person name="Codani J.-J."/>
            <person name="Connerton I.F."/>
            <person name="Cummings N.J."/>
            <person name="Daniel R.A."/>
            <person name="Denizot F."/>
            <person name="Devine K.M."/>
            <person name="Duesterhoeft A."/>
            <person name="Ehrlich S.D."/>
            <person name="Emmerson P.T."/>
            <person name="Entian K.-D."/>
            <person name="Errington J."/>
            <person name="Fabret C."/>
            <person name="Ferrari E."/>
            <person name="Foulger D."/>
            <person name="Fritz C."/>
            <person name="Fujita M."/>
            <person name="Fujita Y."/>
            <person name="Fuma S."/>
            <person name="Galizzi A."/>
            <person name="Galleron N."/>
            <person name="Ghim S.-Y."/>
            <person name="Glaser P."/>
            <person name="Goffeau A."/>
            <person name="Golightly E.J."/>
            <person name="Grandi G."/>
            <person name="Guiseppi G."/>
            <person name="Guy B.J."/>
            <person name="Haga K."/>
            <person name="Haiech J."/>
            <person name="Harwood C.R."/>
            <person name="Henaut A."/>
            <person name="Hilbert H."/>
            <person name="Holsappel S."/>
            <person name="Hosono S."/>
            <person name="Hullo M.-F."/>
            <person name="Itaya M."/>
            <person name="Jones L.-M."/>
            <person name="Joris B."/>
            <person name="Karamata D."/>
            <person name="Kasahara Y."/>
            <person name="Klaerr-Blanchard M."/>
            <person name="Klein C."/>
            <person name="Kobayashi Y."/>
            <person name="Koetter P."/>
            <person name="Koningstein G."/>
            <person name="Krogh S."/>
            <person name="Kumano M."/>
            <person name="Kurita K."/>
            <person name="Lapidus A."/>
            <person name="Lardinois S."/>
            <person name="Lauber J."/>
            <person name="Lazarevic V."/>
            <person name="Lee S.-M."/>
            <person name="Levine A."/>
            <person name="Liu H."/>
            <person name="Masuda S."/>
            <person name="Mauel C."/>
            <person name="Medigue C."/>
            <person name="Medina N."/>
            <person name="Mellado R.P."/>
            <person name="Mizuno M."/>
            <person name="Moestl D."/>
            <person name="Nakai S."/>
            <person name="Noback M."/>
            <person name="Noone D."/>
            <person name="O'Reilly M."/>
            <person name="Ogawa K."/>
            <person name="Ogiwara A."/>
            <person name="Oudega B."/>
            <person name="Park S.-H."/>
            <person name="Parro V."/>
            <person name="Pohl T.M."/>
            <person name="Portetelle D."/>
            <person name="Porwollik S."/>
            <person name="Prescott A.M."/>
            <person name="Presecan E."/>
            <person name="Pujic P."/>
            <person name="Purnelle B."/>
            <person name="Rapoport G."/>
            <person name="Rey M."/>
            <person name="Reynolds S."/>
            <person name="Rieger M."/>
            <person name="Rivolta C."/>
            <person name="Rocha E."/>
            <person name="Roche B."/>
            <person name="Rose M."/>
            <person name="Sadaie Y."/>
            <person name="Sato T."/>
            <person name="Scanlan E."/>
            <person name="Schleich S."/>
            <person name="Schroeter R."/>
            <person name="Scoffone F."/>
            <person name="Sekiguchi J."/>
            <person name="Sekowska A."/>
            <person name="Seror S.J."/>
            <person name="Serror P."/>
            <person name="Shin B.-S."/>
            <person name="Soldo B."/>
            <person name="Sorokin A."/>
            <person name="Tacconi E."/>
            <person name="Takagi T."/>
            <person name="Takahashi H."/>
            <person name="Takemaru K."/>
            <person name="Takeuchi M."/>
            <person name="Tamakoshi A."/>
            <person name="Tanaka T."/>
            <person name="Terpstra P."/>
            <person name="Tognoni A."/>
            <person name="Tosato V."/>
            <person name="Uchiyama S."/>
            <person name="Vandenbol M."/>
            <person name="Vannier F."/>
            <person name="Vassarotti A."/>
            <person name="Viari A."/>
            <person name="Wambutt R."/>
            <person name="Wedler E."/>
            <person name="Wedler H."/>
            <person name="Weitzenegger T."/>
            <person name="Winters P."/>
            <person name="Wipat A."/>
            <person name="Yamamoto H."/>
            <person name="Yamane K."/>
            <person name="Yasumoto K."/>
            <person name="Yata K."/>
            <person name="Yoshida K."/>
            <person name="Yoshikawa H.-F."/>
            <person name="Zumstein E."/>
            <person name="Yoshikawa H."/>
            <person name="Danchin A."/>
        </authorList>
    </citation>
    <scope>NUCLEOTIDE SEQUENCE [LARGE SCALE GENOMIC DNA]</scope>
    <source>
        <strain>168</strain>
    </source>
</reference>
<reference key="3">
    <citation type="journal article" date="1998" name="J. Bacteriol.">
        <title>Identification of a zinc-specific metalloregulatory protein, Zur, controlling zinc transport operons in Bacillus subtilis.</title>
        <authorList>
            <person name="Gaballa A."/>
            <person name="Helmann J.D."/>
        </authorList>
    </citation>
    <scope>INDUCTION</scope>
</reference>
<reference key="4">
    <citation type="journal article" date="2002" name="J. Bacteriol.">
        <title>Functional analysis of the Bacillus subtilis Zur regulon.</title>
        <authorList>
            <person name="Gaballa A."/>
            <person name="Wang T."/>
            <person name="Ye R.W."/>
            <person name="Helmann J.D."/>
        </authorList>
    </citation>
    <scope>FUNCTION</scope>
    <scope>DISRUPTION PHENOTYPE</scope>
</reference>
<reference key="5">
    <citation type="journal article" date="2008" name="J. Bacteriol.">
        <title>Regulation of the Bacillus subtilis yciC gene and insights into the DNA-binding specificity of the zinc-sensing metalloregulator Zur.</title>
        <authorList>
            <person name="Gabriel S.E."/>
            <person name="Miyagi F."/>
            <person name="Gaballa A."/>
            <person name="Helmann J.D."/>
        </authorList>
    </citation>
    <scope>INDUCTION</scope>
</reference>
<reference key="6">
    <citation type="journal article" date="2011" name="Nucleic Acids Res.">
        <title>Sequential binding and sensing of Zn(II) by Bacillus subtilis Zur.</title>
        <authorList>
            <person name="Ma Z."/>
            <person name="Gabriel S.E."/>
            <person name="Helmann J.D."/>
        </authorList>
    </citation>
    <scope>INDUCTION</scope>
</reference>
<keyword id="KW-0143">Chaperone</keyword>
<keyword id="KW-0342">GTP-binding</keyword>
<keyword id="KW-0378">Hydrolase</keyword>
<keyword id="KW-0547">Nucleotide-binding</keyword>
<keyword id="KW-1185">Reference proteome</keyword>
<keyword id="KW-0862">Zinc</keyword>
<organism>
    <name type="scientific">Bacillus subtilis (strain 168)</name>
    <dbReference type="NCBI Taxonomy" id="224308"/>
    <lineage>
        <taxon>Bacteria</taxon>
        <taxon>Bacillati</taxon>
        <taxon>Bacillota</taxon>
        <taxon>Bacilli</taxon>
        <taxon>Bacillales</taxon>
        <taxon>Bacillaceae</taxon>
        <taxon>Bacillus</taxon>
    </lineage>
</organism>
<comment type="function">
    <text evidence="2 4">Zinc chaperone that directly transfers zinc cofactor to target proteins, thereby activating them (By similarity). Zinc is transferred from the CXCC motif in the GTPase domain to the zinc binding site in target proteins in a process requiring GTP hydrolysis (By similarity). Contributes to optimal growth under starvation for zinc (PubMed:12426338).</text>
</comment>
<comment type="catalytic activity">
    <reaction evidence="1">
        <text>GTP + H2O = GDP + phosphate + H(+)</text>
        <dbReference type="Rhea" id="RHEA:19669"/>
        <dbReference type="ChEBI" id="CHEBI:15377"/>
        <dbReference type="ChEBI" id="CHEBI:15378"/>
        <dbReference type="ChEBI" id="CHEBI:37565"/>
        <dbReference type="ChEBI" id="CHEBI:43474"/>
        <dbReference type="ChEBI" id="CHEBI:58189"/>
    </reaction>
    <physiologicalReaction direction="left-to-right" evidence="1">
        <dbReference type="Rhea" id="RHEA:19670"/>
    </physiologicalReaction>
</comment>
<comment type="induction">
    <text evidence="5 6 7">Repressed by zinc via the metallo-regulatory protein Zur.</text>
</comment>
<comment type="disruption phenotype">
    <text evidence="4">No effect in wild-type, but required for optimal growth in strains lacking the ZnuABC zinc uptake system.</text>
</comment>
<comment type="similarity">
    <text evidence="8">Belongs to the SIMIBI class G3E GTPase family. ZNG1 subfamily.</text>
</comment>
<gene>
    <name type="primary">yciC</name>
    <name type="ordered locus">BSU03360</name>
</gene>
<evidence type="ECO:0000250" key="1">
    <source>
        <dbReference type="UniProtKB" id="P24203"/>
    </source>
</evidence>
<evidence type="ECO:0000250" key="2">
    <source>
        <dbReference type="UniProtKB" id="Q8VEH6"/>
    </source>
</evidence>
<evidence type="ECO:0000255" key="3"/>
<evidence type="ECO:0000269" key="4">
    <source>
    </source>
</evidence>
<evidence type="ECO:0000269" key="5">
    <source>
    </source>
</evidence>
<evidence type="ECO:0000269" key="6">
    <source>
    </source>
</evidence>
<evidence type="ECO:0000269" key="7">
    <source>
    </source>
</evidence>
<evidence type="ECO:0000305" key="8"/>
<accession>P94400</accession>
<accession>Q797P9</accession>
<proteinExistence type="evidence at transcript level"/>
<protein>
    <recommendedName>
        <fullName>Zinc chaperone YciC</fullName>
        <ecNumber evidence="1">3.6.5.-</ecNumber>
    </recommendedName>
</protein>
<dbReference type="EC" id="3.6.5.-" evidence="1"/>
<dbReference type="EMBL" id="D50453">
    <property type="protein sequence ID" value="BAA08970.1"/>
    <property type="molecule type" value="Genomic_DNA"/>
</dbReference>
<dbReference type="EMBL" id="AL009126">
    <property type="protein sequence ID" value="CAB12130.1"/>
    <property type="molecule type" value="Genomic_DNA"/>
</dbReference>
<dbReference type="PIR" id="B69760">
    <property type="entry name" value="B69760"/>
</dbReference>
<dbReference type="RefSeq" id="WP_003234625.1">
    <property type="nucleotide sequence ID" value="NZ_OZ025638.1"/>
</dbReference>
<dbReference type="SMR" id="P94400"/>
<dbReference type="FunCoup" id="P94400">
    <property type="interactions" value="364"/>
</dbReference>
<dbReference type="IntAct" id="P94400">
    <property type="interactions" value="1"/>
</dbReference>
<dbReference type="MINT" id="P94400"/>
<dbReference type="STRING" id="224308.BSU03360"/>
<dbReference type="TCDB" id="9.B.10.1.1">
    <property type="family name" value="the putative tripartite zn(2+) transporter (tzt) family"/>
</dbReference>
<dbReference type="PaxDb" id="224308-BSU03360"/>
<dbReference type="DNASU" id="938322"/>
<dbReference type="EnsemblBacteria" id="CAB12130">
    <property type="protein sequence ID" value="CAB12130"/>
    <property type="gene ID" value="BSU_03360"/>
</dbReference>
<dbReference type="GeneID" id="938322"/>
<dbReference type="KEGG" id="bsu:BSU03360"/>
<dbReference type="PATRIC" id="fig|224308.179.peg.351"/>
<dbReference type="eggNOG" id="COG0523">
    <property type="taxonomic scope" value="Bacteria"/>
</dbReference>
<dbReference type="InParanoid" id="P94400"/>
<dbReference type="OrthoDB" id="9808822at2"/>
<dbReference type="PhylomeDB" id="P94400"/>
<dbReference type="BioCyc" id="BSUB:BSU03360-MONOMER"/>
<dbReference type="Proteomes" id="UP000001570">
    <property type="component" value="Chromosome"/>
</dbReference>
<dbReference type="GO" id="GO:0005525">
    <property type="term" value="F:GTP binding"/>
    <property type="evidence" value="ECO:0007669"/>
    <property type="project" value="UniProtKB-KW"/>
</dbReference>
<dbReference type="GO" id="GO:0016787">
    <property type="term" value="F:hydrolase activity"/>
    <property type="evidence" value="ECO:0007669"/>
    <property type="project" value="UniProtKB-KW"/>
</dbReference>
<dbReference type="CDD" id="cd03112">
    <property type="entry name" value="CobW-like"/>
    <property type="match status" value="1"/>
</dbReference>
<dbReference type="Gene3D" id="3.30.1220.10">
    <property type="entry name" value="CobW-like, C-terminal domain"/>
    <property type="match status" value="1"/>
</dbReference>
<dbReference type="Gene3D" id="3.40.50.300">
    <property type="entry name" value="P-loop containing nucleotide triphosphate hydrolases"/>
    <property type="match status" value="1"/>
</dbReference>
<dbReference type="InterPro" id="IPR036627">
    <property type="entry name" value="CobW-likC_sf"/>
</dbReference>
<dbReference type="InterPro" id="IPR011629">
    <property type="entry name" value="CobW-like_C"/>
</dbReference>
<dbReference type="InterPro" id="IPR003495">
    <property type="entry name" value="CobW/HypB/UreG_nucleotide-bd"/>
</dbReference>
<dbReference type="InterPro" id="IPR027417">
    <property type="entry name" value="P-loop_NTPase"/>
</dbReference>
<dbReference type="InterPro" id="IPR051927">
    <property type="entry name" value="Zn_Chap_cDPG_Synth"/>
</dbReference>
<dbReference type="PANTHER" id="PTHR43603">
    <property type="entry name" value="COBW DOMAIN-CONTAINING PROTEIN DDB_G0274527"/>
    <property type="match status" value="1"/>
</dbReference>
<dbReference type="PANTHER" id="PTHR43603:SF3">
    <property type="entry name" value="ZINC CHAPERONE YCIC"/>
    <property type="match status" value="1"/>
</dbReference>
<dbReference type="Pfam" id="PF02492">
    <property type="entry name" value="cobW"/>
    <property type="match status" value="1"/>
</dbReference>
<dbReference type="Pfam" id="PF07683">
    <property type="entry name" value="CobW_C"/>
    <property type="match status" value="1"/>
</dbReference>
<dbReference type="SMART" id="SM00833">
    <property type="entry name" value="CobW_C"/>
    <property type="match status" value="1"/>
</dbReference>
<dbReference type="SUPFAM" id="SSF52540">
    <property type="entry name" value="P-loop containing nucleoside triphosphate hydrolases"/>
    <property type="match status" value="1"/>
</dbReference>
<feature type="chain" id="PRO_0000360621" description="Zinc chaperone YciC">
    <location>
        <begin position="1"/>
        <end position="397"/>
    </location>
</feature>
<feature type="domain" description="CobW C-terminal">
    <location>
        <begin position="259"/>
        <end position="374"/>
    </location>
</feature>
<feature type="short sequence motif" description="CXCC motif" evidence="3">
    <location>
        <begin position="70"/>
        <end position="73"/>
    </location>
</feature>
<feature type="binding site" evidence="3">
    <location>
        <begin position="11"/>
        <end position="18"/>
    </location>
    <ligand>
        <name>GTP</name>
        <dbReference type="ChEBI" id="CHEBI:37565"/>
    </ligand>
</feature>
<feature type="binding site" evidence="3">
    <location>
        <begin position="73"/>
        <end position="77"/>
    </location>
    <ligand>
        <name>GTP</name>
        <dbReference type="ChEBI" id="CHEBI:37565"/>
    </ligand>
</feature>
<feature type="binding site" evidence="3">
    <location>
        <begin position="183"/>
        <end position="186"/>
    </location>
    <ligand>
        <name>GTP</name>
        <dbReference type="ChEBI" id="CHEBI:37565"/>
    </ligand>
</feature>
<sequence>MKKIPVTVLSGYLGAGKTTLLNSILQNREGLKIAVIVNDMSEVNIDAGLVKQEGGLSRTDEKLVEMSNGCICCTLREDLLIEVEKLAKDGRFDYIVIESTGISEPIPVAQTFSYIDEEMGIDLTKFCQLDTMVTVVDANRFWHDYQSGESLLDRKEALGEKDEREIADLLIDQIEFCDVLILNKCDLVSEQELEQLENVLRKLQPRARFIRSVKGNVKPQEILHTGLFNFEEASGSAGWIQELTAGHAEHTPETEEYGISSFVYKRRLPFHSTRFYRWLDQMPKNVVRAKGIVWCASHNNLALLMSQAGPSVTIEPVSYWVAALPKLEQEQVKQQEPEILEEWDPEFGDRLTQLVFIGTDLDEETITKELDQCLLTEYEFDSDWSLFEDPFKWKLNQ</sequence>
<name>YCIC_BACSU</name>